<accession>Q09062</accession>
<feature type="chain" id="PRO_0000174220" description="Integrin beta-2">
    <location>
        <begin position="1" status="less than"/>
        <end position="77" status="greater than"/>
    </location>
</feature>
<feature type="glycosylation site" description="N-linked (GlcNAc...) asparagine" evidence="2">
    <location>
        <position position="54"/>
    </location>
</feature>
<feature type="disulfide bond" evidence="1">
    <location>
        <begin position="36"/>
        <end position="43"/>
    </location>
</feature>
<feature type="non-terminal residue">
    <location>
        <position position="1"/>
    </location>
</feature>
<feature type="non-terminal residue">
    <location>
        <position position="77"/>
    </location>
</feature>
<organism>
    <name type="scientific">Xenopus laevis</name>
    <name type="common">African clawed frog</name>
    <dbReference type="NCBI Taxonomy" id="8355"/>
    <lineage>
        <taxon>Eukaryota</taxon>
        <taxon>Metazoa</taxon>
        <taxon>Chordata</taxon>
        <taxon>Craniata</taxon>
        <taxon>Vertebrata</taxon>
        <taxon>Euteleostomi</taxon>
        <taxon>Amphibia</taxon>
        <taxon>Batrachia</taxon>
        <taxon>Anura</taxon>
        <taxon>Pipoidea</taxon>
        <taxon>Pipidae</taxon>
        <taxon>Xenopodinae</taxon>
        <taxon>Xenopus</taxon>
        <taxon>Xenopus</taxon>
    </lineage>
</organism>
<sequence>ALNGITKSAQIGFGSFVDKTVLPFVNTHPEKLKNPCPEKNENCQPPFSFKHILNLTANGKEFQDQVGKQGISGNLDR</sequence>
<proteinExistence type="evidence at transcript level"/>
<name>ITB2_XENLA</name>
<reference key="1">
    <citation type="journal article" date="1993" name="Dev. Biol.">
        <title>Integrin expression in early amphibian embryos: cDNA cloning and characterization of Xenopus beta 1, beta 2, beta 3, and beta 6 subunits.</title>
        <authorList>
            <person name="Ransom D.G."/>
            <person name="Hens M.D."/>
            <person name="Desimone D.W."/>
        </authorList>
    </citation>
    <scope>NUCLEOTIDE SEQUENCE [MRNA]</scope>
    <scope>DEVELOPMENTAL STAGE</scope>
    <source>
        <tissue>Liver</tissue>
    </source>
</reference>
<protein>
    <recommendedName>
        <fullName>Integrin beta-2</fullName>
    </recommendedName>
</protein>
<dbReference type="EMBL" id="L13592">
    <property type="protein sequence ID" value="AAA16354.1"/>
    <property type="molecule type" value="mRNA"/>
</dbReference>
<dbReference type="SMR" id="Q09062"/>
<dbReference type="GlyCosmos" id="Q09062">
    <property type="glycosylation" value="1 site, No reported glycans"/>
</dbReference>
<dbReference type="AGR" id="Xenbase:XB-GENE-988514"/>
<dbReference type="Xenbase" id="XB-GENE-988514">
    <property type="gene designation" value="itgb2.L"/>
</dbReference>
<dbReference type="Proteomes" id="UP000186698">
    <property type="component" value="Unplaced"/>
</dbReference>
<dbReference type="GO" id="GO:0009986">
    <property type="term" value="C:cell surface"/>
    <property type="evidence" value="ECO:0007669"/>
    <property type="project" value="TreeGrafter"/>
</dbReference>
<dbReference type="GO" id="GO:0005925">
    <property type="term" value="C:focal adhesion"/>
    <property type="evidence" value="ECO:0007669"/>
    <property type="project" value="TreeGrafter"/>
</dbReference>
<dbReference type="GO" id="GO:0008305">
    <property type="term" value="C:integrin complex"/>
    <property type="evidence" value="ECO:0007669"/>
    <property type="project" value="TreeGrafter"/>
</dbReference>
<dbReference type="GO" id="GO:0001540">
    <property type="term" value="F:amyloid-beta binding"/>
    <property type="evidence" value="ECO:0007669"/>
    <property type="project" value="TreeGrafter"/>
</dbReference>
<dbReference type="GO" id="GO:0005178">
    <property type="term" value="F:integrin binding"/>
    <property type="evidence" value="ECO:0007669"/>
    <property type="project" value="TreeGrafter"/>
</dbReference>
<dbReference type="GO" id="GO:0019901">
    <property type="term" value="F:protein kinase binding"/>
    <property type="evidence" value="ECO:0007669"/>
    <property type="project" value="TreeGrafter"/>
</dbReference>
<dbReference type="GO" id="GO:0033627">
    <property type="term" value="P:cell adhesion mediated by integrin"/>
    <property type="evidence" value="ECO:0007669"/>
    <property type="project" value="TreeGrafter"/>
</dbReference>
<dbReference type="GO" id="GO:0007160">
    <property type="term" value="P:cell-matrix adhesion"/>
    <property type="evidence" value="ECO:0007669"/>
    <property type="project" value="TreeGrafter"/>
</dbReference>
<dbReference type="GO" id="GO:0007229">
    <property type="term" value="P:integrin-mediated signaling pathway"/>
    <property type="evidence" value="ECO:0007669"/>
    <property type="project" value="UniProtKB-KW"/>
</dbReference>
<dbReference type="GO" id="GO:0007159">
    <property type="term" value="P:leukocyte cell-cell adhesion"/>
    <property type="evidence" value="ECO:0007669"/>
    <property type="project" value="TreeGrafter"/>
</dbReference>
<dbReference type="GO" id="GO:0030593">
    <property type="term" value="P:neutrophil chemotaxis"/>
    <property type="evidence" value="ECO:0007669"/>
    <property type="project" value="TreeGrafter"/>
</dbReference>
<dbReference type="Gene3D" id="3.40.50.410">
    <property type="entry name" value="von Willebrand factor, type A domain"/>
    <property type="match status" value="1"/>
</dbReference>
<dbReference type="InterPro" id="IPR015812">
    <property type="entry name" value="Integrin_bsu"/>
</dbReference>
<dbReference type="InterPro" id="IPR002369">
    <property type="entry name" value="Integrin_bsu_VWA"/>
</dbReference>
<dbReference type="InterPro" id="IPR036465">
    <property type="entry name" value="vWFA_dom_sf"/>
</dbReference>
<dbReference type="PANTHER" id="PTHR10082">
    <property type="entry name" value="INTEGRIN BETA SUBUNIT"/>
    <property type="match status" value="1"/>
</dbReference>
<dbReference type="PANTHER" id="PTHR10082:SF15">
    <property type="entry name" value="INTEGRIN BETA-2"/>
    <property type="match status" value="1"/>
</dbReference>
<dbReference type="Pfam" id="PF00362">
    <property type="entry name" value="Integrin_beta"/>
    <property type="match status" value="1"/>
</dbReference>
<dbReference type="PRINTS" id="PR01186">
    <property type="entry name" value="INTEGRINB"/>
</dbReference>
<dbReference type="SUPFAM" id="SSF53300">
    <property type="entry name" value="vWA-like"/>
    <property type="match status" value="1"/>
</dbReference>
<gene>
    <name type="primary">itgb2</name>
</gene>
<keyword id="KW-0130">Cell adhesion</keyword>
<keyword id="KW-1015">Disulfide bond</keyword>
<keyword id="KW-0325">Glycoprotein</keyword>
<keyword id="KW-0401">Integrin</keyword>
<keyword id="KW-0472">Membrane</keyword>
<keyword id="KW-0675">Receptor</keyword>
<keyword id="KW-1185">Reference proteome</keyword>
<keyword id="KW-0812">Transmembrane</keyword>
<comment type="function">
    <text>Integrins are a large family of cell surface glycoproteins that mediate cell to cell and cell to matrix adhesion.</text>
</comment>
<comment type="subunit">
    <text evidence="1">Dimer of an alpha and beta subunit.</text>
</comment>
<comment type="subcellular location">
    <subcellularLocation>
        <location evidence="4">Membrane</location>
        <topology evidence="4">Single-pass type I membrane protein</topology>
    </subcellularLocation>
</comment>
<comment type="developmental stage">
    <text evidence="3">Detected at stage 25 and steadily increases, with high levels at the late tailbud stage.</text>
</comment>
<comment type="similarity">
    <text evidence="4">Belongs to the integrin beta chain family.</text>
</comment>
<evidence type="ECO:0000250" key="1"/>
<evidence type="ECO:0000255" key="2"/>
<evidence type="ECO:0000269" key="3">
    <source>
    </source>
</evidence>
<evidence type="ECO:0000305" key="4"/>